<protein>
    <recommendedName>
        <fullName evidence="2">Ornithine carbamoyltransferase</fullName>
        <shortName evidence="2">OTCase</shortName>
        <ecNumber evidence="2">2.1.3.3</ecNumber>
    </recommendedName>
</protein>
<sequence>MTAKTIRHYLQFKDFSLEDYEYVLERTGILKRKFKNYETYHPLHDRTLAMIFEKSSTRTRLSFEAGIFQLGGHAVFMSTRDTQLGRGEPVEDSAQVISRMVDIIMIRTFEQDVITRFAQNSRVPVINGLTNEYHPCQVLADIFTYYEHRGPIAGKTVAWVGDANNMLYTWIEAAQILGFKLRLSTPPGYALDMKLVSPDSAPFYEVFDDPNEACKGADLVTTDVWTSMGFEAENEARKQAFADWCVDEEMMGHANPDALFMHCLPAHRGEEVTAGVIDGPQSVVWDEAENRLHVQKALMEFLLLGRLKH</sequence>
<keyword id="KW-0028">Amino-acid biosynthesis</keyword>
<keyword id="KW-0055">Arginine biosynthesis</keyword>
<keyword id="KW-0963">Cytoplasm</keyword>
<keyword id="KW-0808">Transferase</keyword>
<evidence type="ECO:0000250" key="1"/>
<evidence type="ECO:0000255" key="2">
    <source>
        <dbReference type="HAMAP-Rule" id="MF_01109"/>
    </source>
</evidence>
<organism>
    <name type="scientific">Burkholderia orbicola (strain AU 1054)</name>
    <dbReference type="NCBI Taxonomy" id="331271"/>
    <lineage>
        <taxon>Bacteria</taxon>
        <taxon>Pseudomonadati</taxon>
        <taxon>Pseudomonadota</taxon>
        <taxon>Betaproteobacteria</taxon>
        <taxon>Burkholderiales</taxon>
        <taxon>Burkholderiaceae</taxon>
        <taxon>Burkholderia</taxon>
        <taxon>Burkholderia cepacia complex</taxon>
        <taxon>Burkholderia orbicola</taxon>
    </lineage>
</organism>
<gene>
    <name evidence="2" type="primary">argF</name>
    <name type="ordered locus">Bcen_1942</name>
</gene>
<dbReference type="EC" id="2.1.3.3" evidence="2"/>
<dbReference type="EMBL" id="CP000378">
    <property type="protein sequence ID" value="ABF76845.1"/>
    <property type="molecule type" value="Genomic_DNA"/>
</dbReference>
<dbReference type="SMR" id="Q1BU60"/>
<dbReference type="HOGENOM" id="CLU_043846_3_2_4"/>
<dbReference type="UniPathway" id="UPA00068">
    <property type="reaction ID" value="UER00112"/>
</dbReference>
<dbReference type="GO" id="GO:0005737">
    <property type="term" value="C:cytoplasm"/>
    <property type="evidence" value="ECO:0007669"/>
    <property type="project" value="UniProtKB-SubCell"/>
</dbReference>
<dbReference type="GO" id="GO:0016597">
    <property type="term" value="F:amino acid binding"/>
    <property type="evidence" value="ECO:0007669"/>
    <property type="project" value="InterPro"/>
</dbReference>
<dbReference type="GO" id="GO:0004585">
    <property type="term" value="F:ornithine carbamoyltransferase activity"/>
    <property type="evidence" value="ECO:0007669"/>
    <property type="project" value="UniProtKB-UniRule"/>
</dbReference>
<dbReference type="GO" id="GO:0042450">
    <property type="term" value="P:arginine biosynthetic process via ornithine"/>
    <property type="evidence" value="ECO:0007669"/>
    <property type="project" value="TreeGrafter"/>
</dbReference>
<dbReference type="GO" id="GO:0019240">
    <property type="term" value="P:citrulline biosynthetic process"/>
    <property type="evidence" value="ECO:0007669"/>
    <property type="project" value="TreeGrafter"/>
</dbReference>
<dbReference type="GO" id="GO:0006526">
    <property type="term" value="P:L-arginine biosynthetic process"/>
    <property type="evidence" value="ECO:0007669"/>
    <property type="project" value="UniProtKB-UniPathway"/>
</dbReference>
<dbReference type="FunFam" id="3.40.50.1370:FF:000008">
    <property type="entry name" value="Ornithine carbamoyltransferase"/>
    <property type="match status" value="1"/>
</dbReference>
<dbReference type="Gene3D" id="3.40.50.1370">
    <property type="entry name" value="Aspartate/ornithine carbamoyltransferase"/>
    <property type="match status" value="2"/>
</dbReference>
<dbReference type="HAMAP" id="MF_01109">
    <property type="entry name" value="OTCase"/>
    <property type="match status" value="1"/>
</dbReference>
<dbReference type="InterPro" id="IPR006132">
    <property type="entry name" value="Asp/Orn_carbamoyltranf_P-bd"/>
</dbReference>
<dbReference type="InterPro" id="IPR006130">
    <property type="entry name" value="Asp/Orn_carbamoylTrfase"/>
</dbReference>
<dbReference type="InterPro" id="IPR036901">
    <property type="entry name" value="Asp/Orn_carbamoylTrfase_sf"/>
</dbReference>
<dbReference type="InterPro" id="IPR006131">
    <property type="entry name" value="Asp_carbamoyltransf_Asp/Orn-bd"/>
</dbReference>
<dbReference type="InterPro" id="IPR002292">
    <property type="entry name" value="Orn/put_carbamltrans"/>
</dbReference>
<dbReference type="InterPro" id="IPR024904">
    <property type="entry name" value="OTCase_ArgI"/>
</dbReference>
<dbReference type="NCBIfam" id="TIGR00658">
    <property type="entry name" value="orni_carb_tr"/>
    <property type="match status" value="1"/>
</dbReference>
<dbReference type="NCBIfam" id="NF001986">
    <property type="entry name" value="PRK00779.1"/>
    <property type="match status" value="1"/>
</dbReference>
<dbReference type="PANTHER" id="PTHR45753">
    <property type="entry name" value="ORNITHINE CARBAMOYLTRANSFERASE, MITOCHONDRIAL"/>
    <property type="match status" value="1"/>
</dbReference>
<dbReference type="PANTHER" id="PTHR45753:SF3">
    <property type="entry name" value="ORNITHINE TRANSCARBAMYLASE, MITOCHONDRIAL"/>
    <property type="match status" value="1"/>
</dbReference>
<dbReference type="Pfam" id="PF00185">
    <property type="entry name" value="OTCace"/>
    <property type="match status" value="1"/>
</dbReference>
<dbReference type="Pfam" id="PF02729">
    <property type="entry name" value="OTCace_N"/>
    <property type="match status" value="1"/>
</dbReference>
<dbReference type="PRINTS" id="PR00100">
    <property type="entry name" value="AOTCASE"/>
</dbReference>
<dbReference type="PRINTS" id="PR00102">
    <property type="entry name" value="OTCASE"/>
</dbReference>
<dbReference type="SUPFAM" id="SSF53671">
    <property type="entry name" value="Aspartate/ornithine carbamoyltransferase"/>
    <property type="match status" value="1"/>
</dbReference>
<dbReference type="PROSITE" id="PS00097">
    <property type="entry name" value="CARBAMOYLTRANSFERASE"/>
    <property type="match status" value="1"/>
</dbReference>
<accession>Q1BU60</accession>
<feature type="chain" id="PRO_1000065079" description="Ornithine carbamoyltransferase">
    <location>
        <begin position="1"/>
        <end position="309"/>
    </location>
</feature>
<feature type="binding site" evidence="2">
    <location>
        <begin position="56"/>
        <end position="59"/>
    </location>
    <ligand>
        <name>carbamoyl phosphate</name>
        <dbReference type="ChEBI" id="CHEBI:58228"/>
    </ligand>
</feature>
<feature type="binding site" evidence="2">
    <location>
        <position position="83"/>
    </location>
    <ligand>
        <name>carbamoyl phosphate</name>
        <dbReference type="ChEBI" id="CHEBI:58228"/>
    </ligand>
</feature>
<feature type="binding site" evidence="2">
    <location>
        <position position="107"/>
    </location>
    <ligand>
        <name>carbamoyl phosphate</name>
        <dbReference type="ChEBI" id="CHEBI:58228"/>
    </ligand>
</feature>
<feature type="binding site" evidence="2">
    <location>
        <begin position="134"/>
        <end position="137"/>
    </location>
    <ligand>
        <name>carbamoyl phosphate</name>
        <dbReference type="ChEBI" id="CHEBI:58228"/>
    </ligand>
</feature>
<feature type="binding site" evidence="2">
    <location>
        <position position="165"/>
    </location>
    <ligand>
        <name>L-ornithine</name>
        <dbReference type="ChEBI" id="CHEBI:46911"/>
    </ligand>
</feature>
<feature type="binding site" evidence="2">
    <location>
        <position position="223"/>
    </location>
    <ligand>
        <name>L-ornithine</name>
        <dbReference type="ChEBI" id="CHEBI:46911"/>
    </ligand>
</feature>
<feature type="binding site" evidence="2">
    <location>
        <begin position="227"/>
        <end position="228"/>
    </location>
    <ligand>
        <name>L-ornithine</name>
        <dbReference type="ChEBI" id="CHEBI:46911"/>
    </ligand>
</feature>
<feature type="binding site" evidence="2">
    <location>
        <begin position="263"/>
        <end position="264"/>
    </location>
    <ligand>
        <name>carbamoyl phosphate</name>
        <dbReference type="ChEBI" id="CHEBI:58228"/>
    </ligand>
</feature>
<feature type="binding site" evidence="2">
    <location>
        <position position="291"/>
    </location>
    <ligand>
        <name>carbamoyl phosphate</name>
        <dbReference type="ChEBI" id="CHEBI:58228"/>
    </ligand>
</feature>
<reference key="1">
    <citation type="submission" date="2006-05" db="EMBL/GenBank/DDBJ databases">
        <title>Complete sequence of chromosome 1 of Burkholderia cenocepacia AU 1054.</title>
        <authorList>
            <consortium name="US DOE Joint Genome Institute"/>
            <person name="Copeland A."/>
            <person name="Lucas S."/>
            <person name="Lapidus A."/>
            <person name="Barry K."/>
            <person name="Detter J.C."/>
            <person name="Glavina del Rio T."/>
            <person name="Hammon N."/>
            <person name="Israni S."/>
            <person name="Dalin E."/>
            <person name="Tice H."/>
            <person name="Pitluck S."/>
            <person name="Chain P."/>
            <person name="Malfatti S."/>
            <person name="Shin M."/>
            <person name="Vergez L."/>
            <person name="Schmutz J."/>
            <person name="Larimer F."/>
            <person name="Land M."/>
            <person name="Hauser L."/>
            <person name="Kyrpides N."/>
            <person name="Lykidis A."/>
            <person name="LiPuma J.J."/>
            <person name="Konstantinidis K."/>
            <person name="Tiedje J.M."/>
            <person name="Richardson P."/>
        </authorList>
    </citation>
    <scope>NUCLEOTIDE SEQUENCE [LARGE SCALE GENOMIC DNA]</scope>
    <source>
        <strain>AU 1054</strain>
    </source>
</reference>
<proteinExistence type="inferred from homology"/>
<comment type="function">
    <text evidence="1">Reversibly catalyzes the transfer of the carbamoyl group from carbamoyl phosphate (CP) to the N(epsilon) atom of ornithine (ORN) to produce L-citrulline.</text>
</comment>
<comment type="catalytic activity">
    <reaction evidence="2">
        <text>carbamoyl phosphate + L-ornithine = L-citrulline + phosphate + H(+)</text>
        <dbReference type="Rhea" id="RHEA:19513"/>
        <dbReference type="ChEBI" id="CHEBI:15378"/>
        <dbReference type="ChEBI" id="CHEBI:43474"/>
        <dbReference type="ChEBI" id="CHEBI:46911"/>
        <dbReference type="ChEBI" id="CHEBI:57743"/>
        <dbReference type="ChEBI" id="CHEBI:58228"/>
        <dbReference type="EC" id="2.1.3.3"/>
    </reaction>
</comment>
<comment type="pathway">
    <text evidence="2">Amino-acid biosynthesis; L-arginine biosynthesis; L-arginine from L-ornithine and carbamoyl phosphate: step 1/3.</text>
</comment>
<comment type="subcellular location">
    <subcellularLocation>
        <location evidence="2">Cytoplasm</location>
    </subcellularLocation>
</comment>
<comment type="similarity">
    <text evidence="2">Belongs to the aspartate/ornithine carbamoyltransferase superfamily. OTCase family.</text>
</comment>
<name>OTC_BURO1</name>